<gene>
    <name evidence="1" type="primary">atpH</name>
    <name type="ordered locus">PSPA7_6359</name>
</gene>
<proteinExistence type="inferred from homology"/>
<feature type="chain" id="PRO_1000184769" description="ATP synthase subunit delta">
    <location>
        <begin position="1"/>
        <end position="178"/>
    </location>
</feature>
<accession>A6VF35</accession>
<keyword id="KW-0066">ATP synthesis</keyword>
<keyword id="KW-0997">Cell inner membrane</keyword>
<keyword id="KW-1003">Cell membrane</keyword>
<keyword id="KW-0139">CF(1)</keyword>
<keyword id="KW-0375">Hydrogen ion transport</keyword>
<keyword id="KW-0406">Ion transport</keyword>
<keyword id="KW-0472">Membrane</keyword>
<keyword id="KW-0813">Transport</keyword>
<organism>
    <name type="scientific">Pseudomonas paraeruginosa (strain DSM 24068 / PA7)</name>
    <name type="common">Pseudomonas aeruginosa (strain PA7)</name>
    <dbReference type="NCBI Taxonomy" id="381754"/>
    <lineage>
        <taxon>Bacteria</taxon>
        <taxon>Pseudomonadati</taxon>
        <taxon>Pseudomonadota</taxon>
        <taxon>Gammaproteobacteria</taxon>
        <taxon>Pseudomonadales</taxon>
        <taxon>Pseudomonadaceae</taxon>
        <taxon>Pseudomonas</taxon>
        <taxon>Pseudomonas paraeruginosa</taxon>
    </lineage>
</organism>
<name>ATPD_PSEP7</name>
<evidence type="ECO:0000255" key="1">
    <source>
        <dbReference type="HAMAP-Rule" id="MF_01416"/>
    </source>
</evidence>
<protein>
    <recommendedName>
        <fullName evidence="1">ATP synthase subunit delta</fullName>
    </recommendedName>
    <alternativeName>
        <fullName evidence="1">ATP synthase F(1) sector subunit delta</fullName>
    </alternativeName>
    <alternativeName>
        <fullName evidence="1">F-type ATPase subunit delta</fullName>
        <shortName evidence="1">F-ATPase subunit delta</shortName>
    </alternativeName>
</protein>
<sequence>MAELTTLARPYAKAAFEYAQAHQQLADWSAALGVLAAVSQDDTVRQLLKEPQLTSSAKAQSLIDVCGDKLNAPAQNFVRTVAENKRLELLPTIAEMYEQLKAEQEKSVEVEVTSAFTLSKEQQDKLAKALSARLSREVRLHASEDASLIGGVIIRAGDLVIDGSVRGKLAKLAEALKS</sequence>
<dbReference type="EMBL" id="CP000744">
    <property type="protein sequence ID" value="ABR83141.1"/>
    <property type="molecule type" value="Genomic_DNA"/>
</dbReference>
<dbReference type="RefSeq" id="WP_003097135.1">
    <property type="nucleotide sequence ID" value="NC_009656.1"/>
</dbReference>
<dbReference type="SMR" id="A6VF35"/>
<dbReference type="KEGG" id="pap:PSPA7_6359"/>
<dbReference type="HOGENOM" id="CLU_085114_3_0_6"/>
<dbReference type="Proteomes" id="UP000001582">
    <property type="component" value="Chromosome"/>
</dbReference>
<dbReference type="GO" id="GO:0005886">
    <property type="term" value="C:plasma membrane"/>
    <property type="evidence" value="ECO:0007669"/>
    <property type="project" value="UniProtKB-SubCell"/>
</dbReference>
<dbReference type="GO" id="GO:0045259">
    <property type="term" value="C:proton-transporting ATP synthase complex"/>
    <property type="evidence" value="ECO:0007669"/>
    <property type="project" value="UniProtKB-KW"/>
</dbReference>
<dbReference type="GO" id="GO:0046933">
    <property type="term" value="F:proton-transporting ATP synthase activity, rotational mechanism"/>
    <property type="evidence" value="ECO:0007669"/>
    <property type="project" value="UniProtKB-UniRule"/>
</dbReference>
<dbReference type="Gene3D" id="1.10.520.20">
    <property type="entry name" value="N-terminal domain of the delta subunit of the F1F0-ATP synthase"/>
    <property type="match status" value="1"/>
</dbReference>
<dbReference type="HAMAP" id="MF_01416">
    <property type="entry name" value="ATP_synth_delta_bact"/>
    <property type="match status" value="1"/>
</dbReference>
<dbReference type="InterPro" id="IPR026015">
    <property type="entry name" value="ATP_synth_OSCP/delta_N_sf"/>
</dbReference>
<dbReference type="InterPro" id="IPR000711">
    <property type="entry name" value="ATPase_OSCP/dsu"/>
</dbReference>
<dbReference type="NCBIfam" id="TIGR01145">
    <property type="entry name" value="ATP_synt_delta"/>
    <property type="match status" value="1"/>
</dbReference>
<dbReference type="NCBIfam" id="NF004402">
    <property type="entry name" value="PRK05758.2-2"/>
    <property type="match status" value="1"/>
</dbReference>
<dbReference type="PANTHER" id="PTHR11910">
    <property type="entry name" value="ATP SYNTHASE DELTA CHAIN"/>
    <property type="match status" value="1"/>
</dbReference>
<dbReference type="Pfam" id="PF00213">
    <property type="entry name" value="OSCP"/>
    <property type="match status" value="1"/>
</dbReference>
<dbReference type="PRINTS" id="PR00125">
    <property type="entry name" value="ATPASEDELTA"/>
</dbReference>
<dbReference type="SUPFAM" id="SSF47928">
    <property type="entry name" value="N-terminal domain of the delta subunit of the F1F0-ATP synthase"/>
    <property type="match status" value="1"/>
</dbReference>
<reference key="1">
    <citation type="submission" date="2007-06" db="EMBL/GenBank/DDBJ databases">
        <authorList>
            <person name="Dodson R.J."/>
            <person name="Harkins D."/>
            <person name="Paulsen I.T."/>
        </authorList>
    </citation>
    <scope>NUCLEOTIDE SEQUENCE [LARGE SCALE GENOMIC DNA]</scope>
    <source>
        <strain>DSM 24068 / PA7</strain>
    </source>
</reference>
<comment type="function">
    <text evidence="1">F(1)F(0) ATP synthase produces ATP from ADP in the presence of a proton or sodium gradient. F-type ATPases consist of two structural domains, F(1) containing the extramembraneous catalytic core and F(0) containing the membrane proton channel, linked together by a central stalk and a peripheral stalk. During catalysis, ATP synthesis in the catalytic domain of F(1) is coupled via a rotary mechanism of the central stalk subunits to proton translocation.</text>
</comment>
<comment type="function">
    <text evidence="1">This protein is part of the stalk that links CF(0) to CF(1). It either transmits conformational changes from CF(0) to CF(1) or is implicated in proton conduction.</text>
</comment>
<comment type="subunit">
    <text evidence="1">F-type ATPases have 2 components, F(1) - the catalytic core - and F(0) - the membrane proton channel. F(1) has five subunits: alpha(3), beta(3), gamma(1), delta(1), epsilon(1). F(0) has three main subunits: a(1), b(2) and c(10-14). The alpha and beta chains form an alternating ring which encloses part of the gamma chain. F(1) is attached to F(0) by a central stalk formed by the gamma and epsilon chains, while a peripheral stalk is formed by the delta and b chains.</text>
</comment>
<comment type="subcellular location">
    <subcellularLocation>
        <location evidence="1">Cell inner membrane</location>
        <topology evidence="1">Peripheral membrane protein</topology>
    </subcellularLocation>
</comment>
<comment type="similarity">
    <text evidence="1">Belongs to the ATPase delta chain family.</text>
</comment>